<feature type="signal peptide" evidence="4">
    <location>
        <begin position="1"/>
        <end position="18"/>
    </location>
</feature>
<feature type="chain" id="PRO_0000407200" description="Extracellular metalloprotease 1">
    <location>
        <begin position="19"/>
        <end position="276"/>
    </location>
</feature>
<feature type="region of interest" description="Disordered" evidence="3">
    <location>
        <begin position="211"/>
        <end position="233"/>
    </location>
</feature>
<feature type="active site" evidence="2">
    <location>
        <position position="192"/>
    </location>
</feature>
<feature type="binding site" evidence="2">
    <location>
        <position position="191"/>
    </location>
    <ligand>
        <name>Zn(2+)</name>
        <dbReference type="ChEBI" id="CHEBI:29105"/>
        <note>catalytic</note>
    </ligand>
</feature>
<feature type="binding site" evidence="2">
    <location>
        <position position="195"/>
    </location>
    <ligand>
        <name>Zn(2+)</name>
        <dbReference type="ChEBI" id="CHEBI:29105"/>
        <note>catalytic</note>
    </ligand>
</feature>
<feature type="disulfide bond" evidence="1">
    <location>
        <begin position="227"/>
        <end position="253"/>
    </location>
</feature>
<accession>C5P3X6</accession>
<accession>Q71H76</accession>
<gene>
    <name type="primary">MEP1</name>
    <name type="ORF">CPC735_062670</name>
</gene>
<proteinExistence type="evidence at protein level"/>
<dbReference type="EC" id="3.4.24.-"/>
<dbReference type="EMBL" id="AF500214">
    <property type="protein sequence ID" value="AAQ07436.1"/>
    <property type="molecule type" value="Genomic_DNA"/>
</dbReference>
<dbReference type="EMBL" id="ACFW01000015">
    <property type="protein sequence ID" value="EER28394.1"/>
    <property type="molecule type" value="Genomic_DNA"/>
</dbReference>
<dbReference type="RefSeq" id="XP_003070539.1">
    <property type="nucleotide sequence ID" value="XM_003070493.1"/>
</dbReference>
<dbReference type="SMR" id="C5P3X6"/>
<dbReference type="MEROPS" id="M43.008"/>
<dbReference type="GeneID" id="9696034"/>
<dbReference type="KEGG" id="cpw:9696034"/>
<dbReference type="VEuPathDB" id="FungiDB:CPC735_062670"/>
<dbReference type="HOGENOM" id="CLU_048726_0_0_1"/>
<dbReference type="OrthoDB" id="536211at2759"/>
<dbReference type="PHI-base" id="PHI:479"/>
<dbReference type="Proteomes" id="UP000009084">
    <property type="component" value="Unassembled WGS sequence"/>
</dbReference>
<dbReference type="GO" id="GO:0005576">
    <property type="term" value="C:extracellular region"/>
    <property type="evidence" value="ECO:0000314"/>
    <property type="project" value="UniProtKB"/>
</dbReference>
<dbReference type="GO" id="GO:0046872">
    <property type="term" value="F:metal ion binding"/>
    <property type="evidence" value="ECO:0007669"/>
    <property type="project" value="UniProtKB-KW"/>
</dbReference>
<dbReference type="GO" id="GO:0008237">
    <property type="term" value="F:metallopeptidase activity"/>
    <property type="evidence" value="ECO:0000314"/>
    <property type="project" value="UniProtKB"/>
</dbReference>
<dbReference type="GO" id="GO:0006508">
    <property type="term" value="P:proteolysis"/>
    <property type="evidence" value="ECO:0007669"/>
    <property type="project" value="UniProtKB-KW"/>
</dbReference>
<dbReference type="GO" id="GO:0141141">
    <property type="term" value="P:symbiont-mediated evasion of recognition by host pattern recognition receptor"/>
    <property type="evidence" value="ECO:0000269"/>
    <property type="project" value="SigSci"/>
</dbReference>
<dbReference type="CDD" id="cd04275">
    <property type="entry name" value="ZnMc_pappalysin_like"/>
    <property type="match status" value="1"/>
</dbReference>
<dbReference type="Gene3D" id="3.40.390.10">
    <property type="entry name" value="Collagenase (Catalytic Domain)"/>
    <property type="match status" value="1"/>
</dbReference>
<dbReference type="InterPro" id="IPR024079">
    <property type="entry name" value="MetalloPept_cat_dom_sf"/>
</dbReference>
<dbReference type="InterPro" id="IPR008754">
    <property type="entry name" value="Peptidase_M43"/>
</dbReference>
<dbReference type="PANTHER" id="PTHR47466">
    <property type="match status" value="1"/>
</dbReference>
<dbReference type="PANTHER" id="PTHR47466:SF1">
    <property type="entry name" value="METALLOPROTEASE MEP1 (AFU_ORTHOLOGUE AFUA_1G07730)-RELATED"/>
    <property type="match status" value="1"/>
</dbReference>
<dbReference type="Pfam" id="PF05572">
    <property type="entry name" value="Peptidase_M43"/>
    <property type="match status" value="1"/>
</dbReference>
<dbReference type="SUPFAM" id="SSF55486">
    <property type="entry name" value="Metalloproteases ('zincins'), catalytic domain"/>
    <property type="match status" value="1"/>
</dbReference>
<dbReference type="PROSITE" id="PS00142">
    <property type="entry name" value="ZINC_PROTEASE"/>
    <property type="match status" value="1"/>
</dbReference>
<reference key="1">
    <citation type="journal article" date="2005" name="Infect. Immun.">
        <title>A metalloproteinase of Coccidioides posadasii contributes to evasion of host detection.</title>
        <authorList>
            <person name="Hung C.Y."/>
            <person name="Seshan K.R."/>
            <person name="Yu J.J."/>
            <person name="Schaller R."/>
            <person name="Xue J."/>
            <person name="Basrur V."/>
            <person name="Gardner M.J."/>
            <person name="Cole G.T."/>
        </authorList>
    </citation>
    <scope>NUCLEOTIDE SEQUENCE [GENOMIC DNA]</scope>
    <scope>PROTEIN SEQUENCE OF 19-33; 75-88 AND 130-141</scope>
    <scope>INDUCTION</scope>
    <scope>SUBCELLULAR LOCATION</scope>
    <scope>FUNCTION</scope>
    <source>
        <strain>C735</strain>
    </source>
</reference>
<reference key="2">
    <citation type="journal article" date="2009" name="Genome Res.">
        <title>Comparative genomic analyses of the human fungal pathogens Coccidioides and their relatives.</title>
        <authorList>
            <person name="Sharpton T.J."/>
            <person name="Stajich J.E."/>
            <person name="Rounsley S.D."/>
            <person name="Gardner M.J."/>
            <person name="Wortman J.R."/>
            <person name="Jordar V.S."/>
            <person name="Maiti R."/>
            <person name="Kodira C.D."/>
            <person name="Neafsey D.E."/>
            <person name="Zeng Q."/>
            <person name="Hung C.-Y."/>
            <person name="McMahan C."/>
            <person name="Muszewska A."/>
            <person name="Grynberg M."/>
            <person name="Mandel M.A."/>
            <person name="Kellner E.M."/>
            <person name="Barker B.M."/>
            <person name="Galgiani J.N."/>
            <person name="Orbach M.J."/>
            <person name="Kirkland T.N."/>
            <person name="Cole G.T."/>
            <person name="Henn M.R."/>
            <person name="Birren B.W."/>
            <person name="Taylor J.W."/>
        </authorList>
    </citation>
    <scope>NUCLEOTIDE SEQUENCE [LARGE SCALE GENOMIC DNA]</scope>
    <source>
        <strain>C735</strain>
    </source>
</reference>
<keyword id="KW-0903">Direct protein sequencing</keyword>
<keyword id="KW-1015">Disulfide bond</keyword>
<keyword id="KW-0378">Hydrolase</keyword>
<keyword id="KW-0479">Metal-binding</keyword>
<keyword id="KW-0482">Metalloprotease</keyword>
<keyword id="KW-0645">Protease</keyword>
<keyword id="KW-0964">Secreted</keyword>
<keyword id="KW-0732">Signal</keyword>
<keyword id="KW-0843">Virulence</keyword>
<keyword id="KW-0862">Zinc</keyword>
<name>MEP1_COCP7</name>
<protein>
    <recommendedName>
        <fullName>Extracellular metalloprotease 1</fullName>
        <ecNumber>3.4.24.-</ecNumber>
    </recommendedName>
</protein>
<organism>
    <name type="scientific">Coccidioides posadasii (strain C735)</name>
    <name type="common">Valley fever fungus</name>
    <dbReference type="NCBI Taxonomy" id="222929"/>
    <lineage>
        <taxon>Eukaryota</taxon>
        <taxon>Fungi</taxon>
        <taxon>Dikarya</taxon>
        <taxon>Ascomycota</taxon>
        <taxon>Pezizomycotina</taxon>
        <taxon>Eurotiomycetes</taxon>
        <taxon>Eurotiomycetidae</taxon>
        <taxon>Onygenales</taxon>
        <taxon>Onygenaceae</taxon>
        <taxon>Coccidioides</taxon>
    </lineage>
</organism>
<evidence type="ECO:0000250" key="1"/>
<evidence type="ECO:0000255" key="2">
    <source>
        <dbReference type="PROSITE-ProRule" id="PRU10095"/>
    </source>
</evidence>
<evidence type="ECO:0000256" key="3">
    <source>
        <dbReference type="SAM" id="MobiDB-lite"/>
    </source>
</evidence>
<evidence type="ECO:0000269" key="4">
    <source>
    </source>
</evidence>
<evidence type="ECO:0000305" key="5"/>
<sequence>MRVSVPVLALAFGSLAAAAPNAGRRTCGSVPPPEFFEASEKVAALEESGAFADLQAPIEVETYFHVVASSRSERDGYISDQMLSDQIRVMNEDYAPHGVHFNLRETTRTINPSWASDGNEIAMKRSLRKGGYAALNVYFLKDLGGALGYCYFPTNAAPGSTTFIRDGCSVLSSSVPGGSGAPYDLGKTATHEVGHWMGLFHTFQGGCSGQGDYVSDTPPQRSPSSGCPVGRDSCPGGGVDPIHNYMDYSVDSCMNQFTRGQGTRMSSMWRQFRAGK</sequence>
<comment type="function">
    <text evidence="4">Secreted metalloproteinase that allows assimilation of proteinaceous substrates. Pays a pivotal role as a pathogenicity determinant during infections and contributes to the ability of the pathogen to persist within the mammalian host. Digests an immunodominant cell surface antigen (SOWgp) and prevents host recognition of endospores during the phase of development when these fungal cells are most vulnerable to phagocytic cell defenses.</text>
</comment>
<comment type="subcellular location">
    <subcellularLocation>
        <location evidence="4">Secreted</location>
    </subcellularLocation>
</comment>
<comment type="induction">
    <text evidence="4">Peaks of expression occur during the endosporulation stage.</text>
</comment>
<comment type="similarity">
    <text evidence="5">Belongs to the peptidase M43B family.</text>
</comment>